<sequence>MSSKYPRSVRRCLPLWALTLEAALILLFYFFTHYDASLEDQKGLVASYQVGQDLTVMAAIGLGFLTSSFRRHSWSSVAFNLFMLALGVQWAILLDGFLSQFPSGKVVITLFSIRLATMSALSVLISVDAVLGKVNLAQLVVMVLVEVTALGNLRMVISNIFNTDYHMNMMHIYVFAAYFGLSVAWCLPKPLPEGTEDKDQTATIPSLSAMLGALFLWMFWPSFNSALLRSPIERKNAVFNTYYAVAVSVVTAISGSSLAHPQGKISKTYVHSAVLAGGVAVGTSCHLIPSPWLAMVLGLVAGLISVGGAKYLPGCCNRVLGIPHSSIMGYNFSLLGLLGEIIYIVLLVLDTVGAGNGMIGFQVLLSIGELSLAIVIALMSGLLTGLLLNLKIWKAPHEAKYFDDQVFWKFPHLAVGF</sequence>
<comment type="function">
    <text>May be part of an oligomeric complex which is likely to have a transport or channel function in the erythrocyte membrane.</text>
</comment>
<comment type="interaction">
    <interactant intactId="EBI-17249212">
        <id>Q02161-2</id>
    </interactant>
    <interactant intactId="EBI-13059134">
        <id>Q13520</id>
        <label>AQP6</label>
    </interactant>
    <organismsDiffer>false</organismsDiffer>
    <experiments>3</experiments>
</comment>
<comment type="interaction">
    <interactant intactId="EBI-17249212">
        <id>Q02161-2</id>
    </interactant>
    <interactant intactId="EBI-6942903">
        <id>Q96BA8</id>
        <label>CREB3L1</label>
    </interactant>
    <organismsDiffer>false</organismsDiffer>
    <experiments>3</experiments>
</comment>
<comment type="interaction">
    <interactant intactId="EBI-17249212">
        <id>Q02161-2</id>
    </interactant>
    <interactant intactId="EBI-17263240">
        <id>P15941-11</id>
        <label>MUC1</label>
    </interactant>
    <organismsDiffer>false</organismsDiffer>
    <experiments>3</experiments>
</comment>
<comment type="interaction">
    <interactant intactId="EBI-17249212">
        <id>Q02161-2</id>
    </interactant>
    <interactant intactId="EBI-17247926">
        <id>Q9NY72</id>
        <label>SCN3B</label>
    </interactant>
    <organismsDiffer>false</organismsDiffer>
    <experiments>3</experiments>
</comment>
<comment type="interaction">
    <interactant intactId="EBI-17249212">
        <id>Q02161-2</id>
    </interactant>
    <interactant intactId="EBI-17280858">
        <id>Q8WWF3</id>
        <label>SSMEM1</label>
    </interactant>
    <organismsDiffer>false</organismsDiffer>
    <experiments>3</experiments>
</comment>
<comment type="interaction">
    <interactant intactId="EBI-17249212">
        <id>Q02161-2</id>
    </interactant>
    <interactant intactId="EBI-8638294">
        <id>Q9NUH8</id>
        <label>TMEM14B</label>
    </interactant>
    <organismsDiffer>false</organismsDiffer>
    <experiments>3</experiments>
</comment>
<comment type="interaction">
    <interactant intactId="EBI-17249212">
        <id>Q02161-2</id>
    </interactant>
    <interactant intactId="EBI-10982110">
        <id>Q96Q45-2</id>
        <label>TMEM237</label>
    </interactant>
    <organismsDiffer>false</organismsDiffer>
    <experiments>3</experiments>
</comment>
<comment type="subcellular location">
    <subcellularLocation>
        <location evidence="5 10">Cell membrane</location>
        <topology evidence="1">Multi-pass membrane protein</topology>
    </subcellularLocation>
</comment>
<comment type="alternative products">
    <event type="alternative splicing"/>
    <isoform>
        <id>Q02161-1</id>
        <name>1</name>
        <name>Long</name>
        <sequence type="displayed"/>
    </isoform>
    <isoform>
        <id>Q02161-2</id>
        <name>2</name>
        <name>Short 1</name>
        <sequence type="described" ref="VSP_005706"/>
    </isoform>
    <isoform>
        <id>Q02161-3</id>
        <name>3</name>
        <name>Short 2</name>
        <sequence type="described" ref="VSP_005707 VSP_005708"/>
    </isoform>
    <isoform>
        <id>Q02161-4</id>
        <name>4</name>
        <sequence type="described" ref="VSP_047797"/>
    </isoform>
    <isoform>
        <id>Q02161-5</id>
        <name>5</name>
        <sequence type="described" ref="VSP_047796"/>
    </isoform>
    <isoform>
        <id>Q02161-6</id>
        <name>6</name>
        <sequence type="described" ref="VSP_047795 VSP_047798"/>
    </isoform>
</comment>
<comment type="tissue specificity">
    <text>Restricted to tissues or cell lines expressing erythroid characters.</text>
</comment>
<comment type="PTM">
    <text evidence="5 10">Palmitoylated.</text>
</comment>
<comment type="polymorphism">
    <text evidence="3 7 15">RHD and RHCE are responsible for the Rh blood group system. The molecular basis of the Tar=Rh40 blood group antigen is a variant in position 110. Homozygous deletion of the RHD gene results in Rh-negative (dd) individuals (PubMed:10845894, PubMed:1824267). Some polymorhisms lead to weak RHD expression. This phenotype called weak D, formerly known as D(u), is observed in about 0.2% to 1% of Caucasians (PubMed:9864185). Moderately decreased RHD expression results in a phenotype called DHMi (PubMed:9864185).</text>
</comment>
<comment type="disease" evidence="2">
    <disease id="DI-06174">
        <name>Hemolytic disease of fetus and newborn, RH-induced</name>
        <acronym>HDFNRH</acronym>
        <description>A disease that occurs in pregnancies in which mothers who lack the D antigen (RhD) of the Rh blood group have been exposed to the RhD-positive red cells of the fetus. The resulting maternal autoantibodies cross the placenta and destroy fetal red cells.</description>
        <dbReference type="MIM" id="619462"/>
    </disease>
    <text>The disease is caused by variants affecting the gene represented in this entry.</text>
</comment>
<comment type="similarity">
    <text evidence="20">Belongs to the ammonium transporter (TC 2.A.49) family. Rh subfamily.</text>
</comment>
<accession>Q02161</accession>
<accession>Q02162</accession>
<accession>Q07618</accession>
<accession>Q16147</accession>
<accession>Q16235</accession>
<accession>Q16355</accession>
<accession>Q5VSK0</accession>
<accession>Q5XLS9</accession>
<accession>Q5XLT1</accession>
<accession>Q5XLT2</accession>
<accession>Q9NPK0</accession>
<accession>Q9UQ20</accession>
<accession>Q9UQ21</accession>
<accession>Q9UQ22</accession>
<accession>Q9UQ23</accession>
<feature type="initiator methionine" description="Removed" evidence="8 9 11">
    <location>
        <position position="1"/>
    </location>
</feature>
<feature type="chain" id="PRO_0000168190" description="Blood group Rh(D) polypeptide">
    <location>
        <begin position="2"/>
        <end position="417"/>
    </location>
</feature>
<feature type="transmembrane region" description="Helical" evidence="1">
    <location>
        <begin position="12"/>
        <end position="32"/>
    </location>
</feature>
<feature type="transmembrane region" description="Helical" evidence="1">
    <location>
        <begin position="44"/>
        <end position="64"/>
    </location>
</feature>
<feature type="transmembrane region" description="Helical" evidence="1">
    <location>
        <begin position="77"/>
        <end position="97"/>
    </location>
</feature>
<feature type="transmembrane region" description="Helical" evidence="1">
    <location>
        <begin position="107"/>
        <end position="127"/>
    </location>
</feature>
<feature type="transmembrane region" description="Helical" evidence="1">
    <location>
        <begin position="130"/>
        <end position="150"/>
    </location>
</feature>
<feature type="transmembrane region" description="Helical" evidence="1">
    <location>
        <begin position="167"/>
        <end position="187"/>
    </location>
</feature>
<feature type="transmembrane region" description="Helical" evidence="1">
    <location>
        <begin position="203"/>
        <end position="223"/>
    </location>
</feature>
<feature type="transmembrane region" description="Helical" evidence="1">
    <location>
        <begin position="238"/>
        <end position="258"/>
    </location>
</feature>
<feature type="transmembrane region" description="Helical" evidence="1">
    <location>
        <begin position="287"/>
        <end position="307"/>
    </location>
</feature>
<feature type="transmembrane region" description="Helical" evidence="1">
    <location>
        <begin position="334"/>
        <end position="354"/>
    </location>
</feature>
<feature type="transmembrane region" description="Helical" evidence="1">
    <location>
        <begin position="358"/>
        <end position="378"/>
    </location>
</feature>
<feature type="splice variant" id="VSP_005706" description="In isoform 2." evidence="19">
    <location>
        <begin position="314"/>
        <end position="409"/>
    </location>
</feature>
<feature type="splice variant" id="VSP_047795" description="In isoform 6." evidence="17">
    <original>GCCNRVLGIPHSSIMGYNFSLLGLLGEIIYIVLLVLDTVGAGNGMIGFQVLLSIGELSLAIVIAL</original>
    <variation>DWLPGPPQHWGTQLGHRDSSHVWSPDSFLIWLLDFKQKHPRKTRPVQKQDNFLSLLPAFVREKRS</variation>
    <location>
        <begin position="314"/>
        <end position="378"/>
    </location>
</feature>
<feature type="splice variant" id="VSP_005707" description="In isoform 3." evidence="18">
    <original>C</original>
    <variation>S</variation>
    <location>
        <position position="316"/>
    </location>
</feature>
<feature type="splice variant" id="VSP_005708" description="In isoform 3." evidence="18">
    <location>
        <begin position="317"/>
        <end position="417"/>
    </location>
</feature>
<feature type="splice variant" id="VSP_047796" description="In isoform 5." evidence="17">
    <original>MIGFQVLLSIGELSLAIVIALMSGLLTGLLLNLKIWKAPHEAKYFDDQVFWKFPHLAVGF</original>
    <variation>IFLIWLLDFKQKHPRKTRPVQKQDNFLSLLPAFVREKRS</variation>
    <location>
        <begin position="358"/>
        <end position="417"/>
    </location>
</feature>
<feature type="splice variant" id="VSP_047797" description="In isoform 4." evidence="17">
    <original>IGFQVLLSIGELSLAIVIALMSGLLTGLLLNLKIWKAPHEAKYFDDQVFWKFPHLAVGF</original>
    <variation>SLGWNLAVKMAEAGDEELMRLDVSQRNHGGAAVPTGSWMPSTETTIAPNYRDHISVVSSFGCWILSKSIQEKQGLFKNKTTSSHCCLHLYVRNAHDSKVSNVRAGTGVRENGVESFLCHSLRRISPFIMHCRIQQ</variation>
    <location>
        <begin position="359"/>
        <end position="417"/>
    </location>
</feature>
<feature type="splice variant" id="VSP_047798" description="In isoform 6." evidence="17">
    <location>
        <begin position="379"/>
        <end position="417"/>
    </location>
</feature>
<feature type="sequence variant" id="VAR_086023" description="May be associated with low RHD expression, resulting in a weak D phenotype; dbSNP:rs144969459." evidence="15">
    <original>S</original>
    <variation>C</variation>
    <location>
        <position position="3"/>
    </location>
</feature>
<feature type="sequence variant" id="VAR_086024" description="May be associated with low RHD expression, resulting in a weak D phenotype; dbSNP:rs768456998." evidence="15">
    <original>R</original>
    <variation>Q</variation>
    <location>
        <position position="10"/>
    </location>
</feature>
<feature type="sequence variant" id="VAR_034455" description="In dbSNP:rs772865539." evidence="12">
    <original>W</original>
    <variation>C</variation>
    <location>
        <position position="16"/>
    </location>
</feature>
<feature type="sequence variant" id="VAR_035615" description="In a breast cancer sample; somatic mutation." evidence="6">
    <original>S</original>
    <variation>C</variation>
    <location>
        <position position="103"/>
    </location>
</feature>
<feature type="sequence variant" id="VAR_006919" description="In Tar antigen; dbSNP:rs121912762." evidence="13">
    <original>L</original>
    <variation>P</variation>
    <location>
        <position position="110"/>
    </location>
</feature>
<feature type="sequence variant" id="VAR_086025" description="May be associated with low RHD expression, resulting in a weak D phenotype; dbSNP:rs775336070." evidence="15">
    <original>A</original>
    <variation>D</variation>
    <location>
        <position position="149"/>
    </location>
</feature>
<feature type="sequence variant" id="VAR_086026" description="May be associated with low RHD expression, resulting in a weak D phenotype; dbSNP:rs17421158." evidence="14 15">
    <original>S</original>
    <variation>T</variation>
    <location>
        <position position="182"/>
    </location>
</feature>
<feature type="sequence variant" id="VAR_034456" description="In dbSNP:rs1053352.">
    <original>E</original>
    <variation>K</variation>
    <location>
        <position position="193"/>
    </location>
</feature>
<feature type="sequence variant" id="VAR_086027" description="May be associated with low RHD expression, resulting in a weak D phenotype; dbSNP:rs569974439." evidence="15">
    <original>K</original>
    <variation>N</variation>
    <location>
        <position position="198"/>
    </location>
</feature>
<feature type="sequence variant" id="VAR_034457" description="May be associated with low RHD expression, resulting in a weak D phenotype; dbSNP:rs1053355." evidence="15">
    <original>T</original>
    <variation>R</variation>
    <location>
        <position position="201"/>
    </location>
</feature>
<feature type="sequence variant" id="VAR_006920" description="In dbSNP:rs141540728." evidence="4">
    <original>M</original>
    <variation>I</variation>
    <location>
        <position position="218"/>
    </location>
</feature>
<feature type="sequence variant" id="VAR_086028" description="May be associated with low RHD expression, resulting in a weak D phenotype." evidence="15">
    <original>W</original>
    <variation>R</variation>
    <location>
        <position position="220"/>
    </location>
</feature>
<feature type="sequence variant" id="VAR_013304" description="Found in RhDVa(FK) and RhDVa(TT); may be associated with low RHD expression, resulting in a weak D phenotype; dbSNP:rs1053356." evidence="15 16">
    <original>F</original>
    <variation>V</variation>
    <location>
        <position position="223"/>
    </location>
</feature>
<feature type="sequence variant" id="VAR_013305" description="Found in RhDVa(FK), RhDVa(TO), RhDVa(TT) and RhDYo; dbSNP:rs1053359." evidence="16">
    <original>E</original>
    <variation>Q</variation>
    <location>
        <position position="233"/>
    </location>
</feature>
<feature type="sequence variant" id="VAR_013306" description="Found in RhDVa(TO) and RhDVa(TT); dbSNP:rs1053360." evidence="16">
    <original>V</original>
    <variation>M</variation>
    <location>
        <position position="238"/>
    </location>
</feature>
<feature type="sequence variant" id="VAR_013307" description="Found in RhDVa(TT); dbSNP:rs150073306." evidence="16">
    <original>V</original>
    <variation>L</variation>
    <location>
        <position position="245"/>
    </location>
</feature>
<feature type="sequence variant" id="VAR_047996" description="In dbSNP:rs3118454.">
    <original>G</original>
    <variation>R</variation>
    <location>
        <position position="263"/>
    </location>
</feature>
<feature type="sequence variant" id="VAR_086029" description="May be associated with low RHD expression, resulting in a weak D phenotype; dbSNP:rs121912763." evidence="15">
    <original>V</original>
    <variation>G</variation>
    <location>
        <position position="270"/>
    </location>
</feature>
<feature type="sequence variant" id="VAR_086030" description="May be associated with low RHD expression, resulting in a weak D phenotype." evidence="15">
    <original>A</original>
    <variation>P</variation>
    <location>
        <position position="276"/>
    </location>
</feature>
<feature type="sequence variant" id="VAR_086031" description="May be associated with low RHD expression, resulting in a weak D phenotype; dbSNP:rs1557543876." evidence="15">
    <original>G</original>
    <variation>E</variation>
    <location>
        <position position="277"/>
    </location>
</feature>
<feature type="sequence variant" id="VAR_086032" description="May be associated with low RHD expression, resulting in a weak D phenotype; dbSNP:rs142484009." evidence="15">
    <original>G</original>
    <variation>D</variation>
    <location>
        <position position="282"/>
    </location>
</feature>
<feature type="sequence variant" id="VAR_086033" description="May be associated with moderate decrease in RHD expression, resulting in DHMi phenotype; dbSNP:rs766015647." evidence="15">
    <original>T</original>
    <variation>I</variation>
    <location>
        <position position="283"/>
    </location>
</feature>
<feature type="sequence variant" id="VAR_086034" description="May be associated with low RHD expression, resulting in a weak D phenotype." evidence="15">
    <original>A</original>
    <variation>P</variation>
    <location>
        <position position="294"/>
    </location>
</feature>
<feature type="sequence variant" id="VAR_086035" description="May be associated with low RHD expression, resulting in a weak D phenotype; dbSNP:rs371803235." evidence="15">
    <original>M</original>
    <variation>I</variation>
    <location>
        <position position="295"/>
    </location>
</feature>
<feature type="sequence variant" id="VAR_047997" description="In dbSNP:rs590813.">
    <original>V</original>
    <variation>I</variation>
    <location>
        <position position="306"/>
    </location>
</feature>
<feature type="sequence variant" id="VAR_086036" description="May be associated with low RHD expression, resulting in a weak D phenotype; dbSNP:rs762881746." evidence="15">
    <original>G</original>
    <variation>R</variation>
    <location>
        <position position="307"/>
    </location>
</feature>
<feature type="sequence variant" id="VAR_047998" description="In dbSNP:rs590787.">
    <original>Y</original>
    <variation>C</variation>
    <location>
        <position position="311"/>
    </location>
</feature>
<feature type="sequence variant" id="VAR_086037" description="May be associated with low RHD expression, resulting in a weak D phenotype." evidence="15">
    <original>G</original>
    <variation>E</variation>
    <location>
        <position position="339"/>
    </location>
</feature>
<feature type="sequence variant" id="VAR_086038" description="May be associated with low RHD expression, resulting in a weak D phenotype; dbSNP:rs71652374." evidence="15">
    <original>G</original>
    <variation>A</variation>
    <location>
        <position position="385"/>
    </location>
</feature>
<feature type="sequence variant" id="VAR_086039" description="May be associated with low RHD expression, resulting in a weak D phenotype; dbSNP:rs201345482." evidence="15">
    <original>W</original>
    <variation>R</variation>
    <location>
        <position position="393"/>
    </location>
</feature>
<feature type="sequence conflict" description="In Ref. 4; AAB26081." evidence="20" ref="4">
    <original>E</original>
    <variation>G</variation>
    <location>
        <position position="39"/>
    </location>
</feature>
<feature type="sequence conflict" description="In Ref. 4; AAB26081." evidence="20" ref="4">
    <original>S</original>
    <variation>P</variation>
    <location>
        <position position="103"/>
    </location>
</feature>
<feature type="sequence conflict" description="In Ref. 4; AAB26081." evidence="20" ref="4">
    <original>V</original>
    <variation>A</variation>
    <location>
        <position position="127"/>
    </location>
</feature>
<feature type="sequence conflict" description="In Ref. 6; AAB34852." evidence="20" ref="6">
    <original>V</original>
    <variation>M</variation>
    <location>
        <position position="174"/>
    </location>
</feature>
<feature type="sequence conflict" description="In Ref. 4; AAB26081 and 7; AAB31911." evidence="20" ref="4 7">
    <original>G</original>
    <variation>V</variation>
    <location>
        <position position="314"/>
    </location>
</feature>
<feature type="sequence conflict" description="In Ref. 4; AAB26081." evidence="20" ref="4">
    <original>P</original>
    <variation>H</variation>
    <location>
        <position position="323"/>
    </location>
</feature>
<feature type="sequence conflict" description="In Ref. 1; CAA44811/CAA44808, 3; AAA02679, 4; AAB26081, 6; AAB34852 and 8; BAA81899/BAA81900/BAA81901/BAA82159." evidence="20" ref="1 3 4 6 8">
    <original>M</original>
    <variation>T</variation>
    <location>
        <position position="379"/>
    </location>
</feature>
<feature type="sequence conflict" description="In Ref. 6; AAB34852." evidence="20" ref="6">
    <original>E</original>
    <variation>V</variation>
    <location>
        <position position="398"/>
    </location>
</feature>
<name>RHD_HUMAN</name>
<proteinExistence type="evidence at protein level"/>
<dbReference type="EMBL" id="X63097">
    <property type="protein sequence ID" value="CAA44811.1"/>
    <property type="molecule type" value="mRNA"/>
</dbReference>
<dbReference type="EMBL" id="X63094">
    <property type="protein sequence ID" value="CAA44808.1"/>
    <property type="molecule type" value="mRNA"/>
</dbReference>
<dbReference type="EMBL" id="L08429">
    <property type="protein sequence ID" value="AAA02679.1"/>
    <property type="molecule type" value="mRNA"/>
</dbReference>
<dbReference type="EMBL" id="S57971">
    <property type="protein sequence ID" value="AAB26081.1"/>
    <property type="molecule type" value="mRNA"/>
</dbReference>
<dbReference type="EMBL" id="S70174">
    <property type="protein sequence ID" value="AAB30756.1"/>
    <property type="molecule type" value="mRNA"/>
</dbReference>
<dbReference type="EMBL" id="S78509">
    <property type="protein sequence ID" value="AAB34852.1"/>
    <property type="molecule type" value="mRNA"/>
</dbReference>
<dbReference type="EMBL" id="S73913">
    <property type="protein sequence ID" value="AAB31911.1"/>
    <property type="molecule type" value="mRNA"/>
</dbReference>
<dbReference type="EMBL" id="AY751492">
    <property type="protein sequence ID" value="AAU93636.1"/>
    <property type="molecule type" value="mRNA"/>
</dbReference>
<dbReference type="EMBL" id="AY751493">
    <property type="protein sequence ID" value="AAU93637.1"/>
    <property type="molecule type" value="mRNA"/>
</dbReference>
<dbReference type="EMBL" id="AY751495">
    <property type="protein sequence ID" value="AAU93639.1"/>
    <property type="molecule type" value="mRNA"/>
</dbReference>
<dbReference type="EMBL" id="AB018966">
    <property type="protein sequence ID" value="BAA81899.1"/>
    <property type="molecule type" value="mRNA"/>
</dbReference>
<dbReference type="EMBL" id="AB018967">
    <property type="protein sequence ID" value="BAA81900.1"/>
    <property type="molecule type" value="mRNA"/>
</dbReference>
<dbReference type="EMBL" id="AB018968">
    <property type="protein sequence ID" value="BAA81901.1"/>
    <property type="molecule type" value="mRNA"/>
</dbReference>
<dbReference type="EMBL" id="AB018969">
    <property type="protein sequence ID" value="BAA82159.1"/>
    <property type="molecule type" value="mRNA"/>
</dbReference>
<dbReference type="EMBL" id="AL928711">
    <property type="protein sequence ID" value="CAH72602.1"/>
    <property type="molecule type" value="Genomic_DNA"/>
</dbReference>
<dbReference type="CCDS" id="CCDS262.1">
    <molecule id="Q02161-1"/>
</dbReference>
<dbReference type="CCDS" id="CCDS53285.1">
    <molecule id="Q02161-2"/>
</dbReference>
<dbReference type="CCDS" id="CCDS60028.1">
    <molecule id="Q02161-4"/>
</dbReference>
<dbReference type="CCDS" id="CCDS60030.1">
    <molecule id="Q02161-5"/>
</dbReference>
<dbReference type="CCDS" id="CCDS60031.1">
    <molecule id="Q02161-6"/>
</dbReference>
<dbReference type="PIR" id="A46368">
    <property type="entry name" value="A46368"/>
</dbReference>
<dbReference type="PIR" id="I52615">
    <property type="entry name" value="I52615"/>
</dbReference>
<dbReference type="RefSeq" id="NP_001121163.1">
    <molecule id="Q02161-2"/>
    <property type="nucleotide sequence ID" value="NM_001127691.3"/>
</dbReference>
<dbReference type="RefSeq" id="NP_001269797.1">
    <molecule id="Q02161-6"/>
    <property type="nucleotide sequence ID" value="NM_001282868.1"/>
</dbReference>
<dbReference type="RefSeq" id="NP_001269798.1">
    <molecule id="Q02161-5"/>
    <property type="nucleotide sequence ID" value="NM_001282869.2"/>
</dbReference>
<dbReference type="RefSeq" id="NP_001269800.1">
    <molecule id="Q02161-4"/>
    <property type="nucleotide sequence ID" value="NM_001282871.2"/>
</dbReference>
<dbReference type="RefSeq" id="NP_057208.2">
    <molecule id="Q02161-1"/>
    <property type="nucleotide sequence ID" value="NM_016124.4"/>
</dbReference>
<dbReference type="SMR" id="Q02161"/>
<dbReference type="BioGRID" id="111939">
    <property type="interactions" value="8"/>
</dbReference>
<dbReference type="FunCoup" id="Q02161">
    <property type="interactions" value="20"/>
</dbReference>
<dbReference type="IntAct" id="Q02161">
    <property type="interactions" value="7"/>
</dbReference>
<dbReference type="ChEMBL" id="CHEMBL3712996"/>
<dbReference type="TCDB" id="1.A.11.4.3">
    <property type="family name" value="the ammonium transporter channel (amt) family"/>
</dbReference>
<dbReference type="iPTMnet" id="Q02161"/>
<dbReference type="PhosphoSitePlus" id="Q02161"/>
<dbReference type="BioMuta" id="RHD"/>
<dbReference type="DMDM" id="296452980"/>
<dbReference type="MassIVE" id="Q02161"/>
<dbReference type="PeptideAtlas" id="Q02161"/>
<dbReference type="ProteomicsDB" id="58055">
    <molecule id="Q02161-1"/>
</dbReference>
<dbReference type="ProteomicsDB" id="65840"/>
<dbReference type="ABCD" id="Q02161">
    <property type="antibodies" value="105 sequenced antibodies"/>
</dbReference>
<dbReference type="Antibodypedia" id="30382">
    <property type="antibodies" value="264 antibodies from 26 providers"/>
</dbReference>
<dbReference type="DNASU" id="6007"/>
<dbReference type="Ensembl" id="ENST00000328664.9">
    <molecule id="Q02161-1"/>
    <property type="protein sequence ID" value="ENSP00000331871.4"/>
    <property type="gene ID" value="ENSG00000187010.21"/>
</dbReference>
<dbReference type="Ensembl" id="ENST00000342055.9">
    <molecule id="Q02161-4"/>
    <property type="protein sequence ID" value="ENSP00000339577.5"/>
    <property type="gene ID" value="ENSG00000187010.21"/>
</dbReference>
<dbReference type="Ensembl" id="ENST00000357542.8">
    <molecule id="Q02161-5"/>
    <property type="protein sequence ID" value="ENSP00000350150.4"/>
    <property type="gene ID" value="ENSG00000187010.21"/>
</dbReference>
<dbReference type="Ensembl" id="ENST00000417538.6">
    <molecule id="Q02161-6"/>
    <property type="protein sequence ID" value="ENSP00000396420.2"/>
    <property type="gene ID" value="ENSG00000187010.21"/>
</dbReference>
<dbReference type="Ensembl" id="ENST00000454452.6">
    <molecule id="Q02161-2"/>
    <property type="protein sequence ID" value="ENSP00000413849.2"/>
    <property type="gene ID" value="ENSG00000187010.21"/>
</dbReference>
<dbReference type="GeneID" id="6007"/>
<dbReference type="KEGG" id="hsa:6007"/>
<dbReference type="MANE-Select" id="ENST00000328664.9">
    <property type="protein sequence ID" value="ENSP00000331871.4"/>
    <property type="RefSeq nucleotide sequence ID" value="NM_016124.6"/>
    <property type="RefSeq protein sequence ID" value="NP_057208.3"/>
</dbReference>
<dbReference type="UCSC" id="uc001bjz.5">
    <molecule id="Q02161-1"/>
    <property type="organism name" value="human"/>
</dbReference>
<dbReference type="AGR" id="HGNC:10009"/>
<dbReference type="CTD" id="6007"/>
<dbReference type="DisGeNET" id="6007"/>
<dbReference type="GeneCards" id="RHD"/>
<dbReference type="HGNC" id="HGNC:10009">
    <property type="gene designation" value="RHD"/>
</dbReference>
<dbReference type="HPA" id="ENSG00000187010">
    <property type="expression patterns" value="Tissue enriched (bone)"/>
</dbReference>
<dbReference type="MalaCards" id="RHD"/>
<dbReference type="MIM" id="111680">
    <property type="type" value="gene"/>
</dbReference>
<dbReference type="MIM" id="619462">
    <property type="type" value="phenotype"/>
</dbReference>
<dbReference type="neXtProt" id="NX_Q02161"/>
<dbReference type="OpenTargets" id="ENSG00000187010"/>
<dbReference type="Orphanet" id="71275">
    <property type="disease" value="Rh deficiency syndrome"/>
</dbReference>
<dbReference type="PharmGKB" id="PA34387"/>
<dbReference type="VEuPathDB" id="HostDB:ENSG00000187010"/>
<dbReference type="GeneTree" id="ENSGT00950000182844"/>
<dbReference type="HOGENOM" id="CLU_021386_1_0_1"/>
<dbReference type="InParanoid" id="Q02161"/>
<dbReference type="OMA" id="ECTIPLW"/>
<dbReference type="OrthoDB" id="534912at2759"/>
<dbReference type="PAN-GO" id="Q02161">
    <property type="GO annotations" value="4 GO annotations based on evolutionary models"/>
</dbReference>
<dbReference type="PhylomeDB" id="Q02161"/>
<dbReference type="TreeFam" id="TF314450"/>
<dbReference type="PathwayCommons" id="Q02161"/>
<dbReference type="Reactome" id="R-HSA-9037628">
    <property type="pathway name" value="Rhesus blood group biosynthesis"/>
</dbReference>
<dbReference type="SignaLink" id="Q02161"/>
<dbReference type="BioGRID-ORCS" id="6007">
    <property type="hits" value="12 hits in 1114 CRISPR screens"/>
</dbReference>
<dbReference type="ChiTaRS" id="RHD">
    <property type="organism name" value="human"/>
</dbReference>
<dbReference type="GeneWiki" id="RHD_(gene)"/>
<dbReference type="GenomeRNAi" id="6007"/>
<dbReference type="Pharos" id="Q02161">
    <property type="development level" value="Tbio"/>
</dbReference>
<dbReference type="PRO" id="PR:Q02161"/>
<dbReference type="Proteomes" id="UP000005640">
    <property type="component" value="Chromosome 1"/>
</dbReference>
<dbReference type="RNAct" id="Q02161">
    <property type="molecule type" value="protein"/>
</dbReference>
<dbReference type="Bgee" id="ENSG00000187010">
    <property type="expression patterns" value="Expressed in buccal mucosa cell and 102 other cell types or tissues"/>
</dbReference>
<dbReference type="ExpressionAtlas" id="Q02161">
    <property type="expression patterns" value="baseline and differential"/>
</dbReference>
<dbReference type="GO" id="GO:0005886">
    <property type="term" value="C:plasma membrane"/>
    <property type="evidence" value="ECO:0000318"/>
    <property type="project" value="GO_Central"/>
</dbReference>
<dbReference type="GO" id="GO:0008519">
    <property type="term" value="F:ammonium channel activity"/>
    <property type="evidence" value="ECO:0000318"/>
    <property type="project" value="GO_Central"/>
</dbReference>
<dbReference type="GO" id="GO:0097272">
    <property type="term" value="P:ammonium homeostasis"/>
    <property type="evidence" value="ECO:0000318"/>
    <property type="project" value="GO_Central"/>
</dbReference>
<dbReference type="GO" id="GO:0072488">
    <property type="term" value="P:ammonium transmembrane transport"/>
    <property type="evidence" value="ECO:0000318"/>
    <property type="project" value="GO_Central"/>
</dbReference>
<dbReference type="FunFam" id="1.10.3430.10:FF:000009">
    <property type="entry name" value="Blood group Rh(D) polypeptide"/>
    <property type="match status" value="1"/>
</dbReference>
<dbReference type="Gene3D" id="1.10.3430.10">
    <property type="entry name" value="Ammonium transporter AmtB like domains"/>
    <property type="match status" value="1"/>
</dbReference>
<dbReference type="InterPro" id="IPR029020">
    <property type="entry name" value="Ammonium/urea_transptr"/>
</dbReference>
<dbReference type="InterPro" id="IPR024041">
    <property type="entry name" value="NH4_transpt_AmtB-like_dom"/>
</dbReference>
<dbReference type="InterPro" id="IPR002229">
    <property type="entry name" value="RhesusRHD"/>
</dbReference>
<dbReference type="PANTHER" id="PTHR11730">
    <property type="entry name" value="AMMONIUM TRANSPORTER"/>
    <property type="match status" value="1"/>
</dbReference>
<dbReference type="PANTHER" id="PTHR11730:SF43">
    <property type="entry name" value="BLOOD GROUP RH(CE) POLYPEPTIDE-RELATED"/>
    <property type="match status" value="1"/>
</dbReference>
<dbReference type="Pfam" id="PF00909">
    <property type="entry name" value="Ammonium_transp"/>
    <property type="match status" value="1"/>
</dbReference>
<dbReference type="PRINTS" id="PR00342">
    <property type="entry name" value="RHESUSRHD"/>
</dbReference>
<dbReference type="SUPFAM" id="SSF111352">
    <property type="entry name" value="Ammonium transporter"/>
    <property type="match status" value="1"/>
</dbReference>
<evidence type="ECO:0000255" key="1"/>
<evidence type="ECO:0000269" key="2">
    <source>
    </source>
</evidence>
<evidence type="ECO:0000269" key="3">
    <source>
    </source>
</evidence>
<evidence type="ECO:0000269" key="4">
    <source>
    </source>
</evidence>
<evidence type="ECO:0000269" key="5">
    <source>
    </source>
</evidence>
<evidence type="ECO:0000269" key="6">
    <source>
    </source>
</evidence>
<evidence type="ECO:0000269" key="7">
    <source>
    </source>
</evidence>
<evidence type="ECO:0000269" key="8">
    <source>
    </source>
</evidence>
<evidence type="ECO:0000269" key="9">
    <source>
    </source>
</evidence>
<evidence type="ECO:0000269" key="10">
    <source>
    </source>
</evidence>
<evidence type="ECO:0000269" key="11">
    <source>
    </source>
</evidence>
<evidence type="ECO:0000269" key="12">
    <source>
    </source>
</evidence>
<evidence type="ECO:0000269" key="13">
    <source>
    </source>
</evidence>
<evidence type="ECO:0000269" key="14">
    <source>
    </source>
</evidence>
<evidence type="ECO:0000269" key="15">
    <source>
    </source>
</evidence>
<evidence type="ECO:0000269" key="16">
    <source ref="9"/>
</evidence>
<evidence type="ECO:0000303" key="17">
    <source>
    </source>
</evidence>
<evidence type="ECO:0000303" key="18">
    <source>
    </source>
</evidence>
<evidence type="ECO:0000303" key="19">
    <source>
    </source>
</evidence>
<evidence type="ECO:0000305" key="20"/>
<protein>
    <recommendedName>
        <fullName>Blood group Rh(D) polypeptide</fullName>
    </recommendedName>
    <alternativeName>
        <fullName>RHXIII</fullName>
    </alternativeName>
    <alternativeName>
        <fullName>Rh polypeptide 2</fullName>
        <shortName>RhPII</shortName>
    </alternativeName>
    <alternativeName>
        <fullName>Rhesus D antigen</fullName>
    </alternativeName>
    <cdAntigenName>CD240D</cdAntigenName>
</protein>
<reference key="1">
    <citation type="journal article" date="1992" name="Proc. Natl. Acad. Sci. U.S.A.">
        <title>Molecular cloning and primary structure of the human blood group RhD polypeptide.</title>
        <authorList>
            <person name="le van Kim C."/>
            <person name="Mouro I."/>
            <person name="Cherif-Zahar B."/>
            <person name="Raynal V."/>
            <person name="Cherrier C."/>
            <person name="Cartron J.-P."/>
            <person name="Colin Y."/>
        </authorList>
    </citation>
    <scope>NUCLEOTIDE SEQUENCE [MRNA] (ISOFORM 1)</scope>
    <scope>VARIANT ILE-218</scope>
    <source>
        <tissue>Bone marrow</tissue>
    </source>
</reference>
<reference key="2">
    <citation type="journal article" date="1992" name="Blood">
        <title>Multiple Rh messenger RNA isoforms are produced by alternative splicing.</title>
        <authorList>
            <person name="le van Kim C."/>
            <person name="Cherif-Zahar B."/>
            <person name="Raynal V."/>
            <person name="Mouro I."/>
            <person name="Lopez M."/>
            <person name="Cartron J.-P."/>
            <person name="Colin Y."/>
        </authorList>
    </citation>
    <scope>NUCLEOTIDE SEQUENCE [MRNA] (ISOFORM 1)</scope>
    <source>
        <tissue>Bone marrow</tissue>
    </source>
</reference>
<reference key="3">
    <citation type="journal article" date="1993" name="Blood">
        <title>Molecular cloning of RhD cDNA derived from a gene present in RhD-positive, but not RhD-negative individuals.</title>
        <authorList>
            <person name="Arce M.A."/>
            <person name="Thompson E.S."/>
            <person name="Wagner S."/>
            <person name="Coyne K.E."/>
            <person name="Ferdman B.A."/>
            <person name="Lublin D.M."/>
        </authorList>
    </citation>
    <scope>NUCLEOTIDE SEQUENCE [MRNA] (ISOFORM 1)</scope>
</reference>
<reference key="4">
    <citation type="journal article" date="1993" name="Hum. Genet.">
        <title>Isolation of a new cDNA clone encoding an Rh polypeptide associated with the Rh blood group system.</title>
        <authorList>
            <person name="Kajii E."/>
            <person name="Umenishi F."/>
            <person name="Iwamoto S."/>
            <person name="Ikemoto S."/>
        </authorList>
    </citation>
    <scope>NUCLEOTIDE SEQUENCE [MRNA] (ISOFORM 1)</scope>
    <scope>VARIANT THR-182</scope>
</reference>
<reference key="5">
    <citation type="journal article" date="1994" name="Blood">
        <title>Identification of a new RhD-specific mRNA from K562 cells.</title>
        <authorList>
            <person name="Westhoff C.M."/>
            <person name="Wylie D.E."/>
        </authorList>
    </citation>
    <scope>NUCLEOTIDE SEQUENCE [MRNA] (ISOFORM 2)</scope>
</reference>
<reference key="6">
    <citation type="journal article" date="1995" name="Blood">
        <title>Identification of a partial internal deletion in the RH locus causing the human erythrocyte D-phenotype.</title>
        <authorList>
            <person name="Huang C.-H."/>
            <person name="Reid M.E."/>
            <person name="Chen Y."/>
        </authorList>
    </citation>
    <scope>NUCLEOTIDE SEQUENCE [MRNA] (ISOFORM 1)</scope>
    <scope>VARIANT CYS-16</scope>
</reference>
<reference key="7">
    <citation type="journal article" date="1994" name="Blood">
        <title>Rh(D) antigen expression and isolation of a new Rh(D) cDNA isoform in human erythroleukemic K562 cells.</title>
        <authorList>
            <person name="Suyama K."/>
            <person name="Lunn R."/>
            <person name="Haller S."/>
            <person name="Goldstein J."/>
        </authorList>
    </citation>
    <scope>NUCLEOTIDE SEQUENCE [MRNA] (ISOFORM 3)</scope>
</reference>
<reference key="8">
    <citation type="journal article" date="2006" name="Transfus. Apher. Sci.">
        <title>Multiple isoforms excluding normal RhD mRNA detected in Rh blood group Del phenotype with RHD 1227A allele.</title>
        <authorList>
            <person name="Shao C.P."/>
            <person name="Xiong W."/>
            <person name="Zhou Y.Y."/>
        </authorList>
    </citation>
    <scope>NUCLEOTIDE SEQUENCE [MRNA] (ISOFORMS 4; 5 AND 6)</scope>
    <scope>ALTERNATIVE SPLICING</scope>
</reference>
<reference key="9">
    <citation type="submission" date="1998-10" db="EMBL/GenBank/DDBJ databases">
        <title>Polymorphisms of RhDVa in Japanese.</title>
        <authorList>
            <person name="Hyodo H."/>
            <person name="Ishikawa Y."/>
            <person name="Kashiwase K."/>
            <person name="Ogawa A."/>
            <person name="Watanabe Y."/>
            <person name="Tsuneyama H."/>
            <person name="Toyoda C."/>
            <person name="Uchikawa M."/>
            <person name="Akaza T."/>
            <person name="Fujii T."/>
        </authorList>
    </citation>
    <scope>NUCLEOTIDE SEQUENCE [MRNA]</scope>
    <scope>VARIANTS VAL-223; GLN-233; MET-238 AND LEU-245</scope>
</reference>
<reference key="10">
    <citation type="journal article" date="2006" name="Nature">
        <title>The DNA sequence and biological annotation of human chromosome 1.</title>
        <authorList>
            <person name="Gregory S.G."/>
            <person name="Barlow K.F."/>
            <person name="McLay K.E."/>
            <person name="Kaul R."/>
            <person name="Swarbreck D."/>
            <person name="Dunham A."/>
            <person name="Scott C.E."/>
            <person name="Howe K.L."/>
            <person name="Woodfine K."/>
            <person name="Spencer C.C.A."/>
            <person name="Jones M.C."/>
            <person name="Gillson C."/>
            <person name="Searle S."/>
            <person name="Zhou Y."/>
            <person name="Kokocinski F."/>
            <person name="McDonald L."/>
            <person name="Evans R."/>
            <person name="Phillips K."/>
            <person name="Atkinson A."/>
            <person name="Cooper R."/>
            <person name="Jones C."/>
            <person name="Hall R.E."/>
            <person name="Andrews T.D."/>
            <person name="Lloyd C."/>
            <person name="Ainscough R."/>
            <person name="Almeida J.P."/>
            <person name="Ambrose K.D."/>
            <person name="Anderson F."/>
            <person name="Andrew R.W."/>
            <person name="Ashwell R.I.S."/>
            <person name="Aubin K."/>
            <person name="Babbage A.K."/>
            <person name="Bagguley C.L."/>
            <person name="Bailey J."/>
            <person name="Beasley H."/>
            <person name="Bethel G."/>
            <person name="Bird C.P."/>
            <person name="Bray-Allen S."/>
            <person name="Brown J.Y."/>
            <person name="Brown A.J."/>
            <person name="Buckley D."/>
            <person name="Burton J."/>
            <person name="Bye J."/>
            <person name="Carder C."/>
            <person name="Chapman J.C."/>
            <person name="Clark S.Y."/>
            <person name="Clarke G."/>
            <person name="Clee C."/>
            <person name="Cobley V."/>
            <person name="Collier R.E."/>
            <person name="Corby N."/>
            <person name="Coville G.J."/>
            <person name="Davies J."/>
            <person name="Deadman R."/>
            <person name="Dunn M."/>
            <person name="Earthrowl M."/>
            <person name="Ellington A.G."/>
            <person name="Errington H."/>
            <person name="Frankish A."/>
            <person name="Frankland J."/>
            <person name="French L."/>
            <person name="Garner P."/>
            <person name="Garnett J."/>
            <person name="Gay L."/>
            <person name="Ghori M.R.J."/>
            <person name="Gibson R."/>
            <person name="Gilby L.M."/>
            <person name="Gillett W."/>
            <person name="Glithero R.J."/>
            <person name="Grafham D.V."/>
            <person name="Griffiths C."/>
            <person name="Griffiths-Jones S."/>
            <person name="Grocock R."/>
            <person name="Hammond S."/>
            <person name="Harrison E.S.I."/>
            <person name="Hart E."/>
            <person name="Haugen E."/>
            <person name="Heath P.D."/>
            <person name="Holmes S."/>
            <person name="Holt K."/>
            <person name="Howden P.J."/>
            <person name="Hunt A.R."/>
            <person name="Hunt S.E."/>
            <person name="Hunter G."/>
            <person name="Isherwood J."/>
            <person name="James R."/>
            <person name="Johnson C."/>
            <person name="Johnson D."/>
            <person name="Joy A."/>
            <person name="Kay M."/>
            <person name="Kershaw J.K."/>
            <person name="Kibukawa M."/>
            <person name="Kimberley A.M."/>
            <person name="King A."/>
            <person name="Knights A.J."/>
            <person name="Lad H."/>
            <person name="Laird G."/>
            <person name="Lawlor S."/>
            <person name="Leongamornlert D.A."/>
            <person name="Lloyd D.M."/>
            <person name="Loveland J."/>
            <person name="Lovell J."/>
            <person name="Lush M.J."/>
            <person name="Lyne R."/>
            <person name="Martin S."/>
            <person name="Mashreghi-Mohammadi M."/>
            <person name="Matthews L."/>
            <person name="Matthews N.S.W."/>
            <person name="McLaren S."/>
            <person name="Milne S."/>
            <person name="Mistry S."/>
            <person name="Moore M.J.F."/>
            <person name="Nickerson T."/>
            <person name="O'Dell C.N."/>
            <person name="Oliver K."/>
            <person name="Palmeiri A."/>
            <person name="Palmer S.A."/>
            <person name="Parker A."/>
            <person name="Patel D."/>
            <person name="Pearce A.V."/>
            <person name="Peck A.I."/>
            <person name="Pelan S."/>
            <person name="Phelps K."/>
            <person name="Phillimore B.J."/>
            <person name="Plumb R."/>
            <person name="Rajan J."/>
            <person name="Raymond C."/>
            <person name="Rouse G."/>
            <person name="Saenphimmachak C."/>
            <person name="Sehra H.K."/>
            <person name="Sheridan E."/>
            <person name="Shownkeen R."/>
            <person name="Sims S."/>
            <person name="Skuce C.D."/>
            <person name="Smith M."/>
            <person name="Steward C."/>
            <person name="Subramanian S."/>
            <person name="Sycamore N."/>
            <person name="Tracey A."/>
            <person name="Tromans A."/>
            <person name="Van Helmond Z."/>
            <person name="Wall M."/>
            <person name="Wallis J.M."/>
            <person name="White S."/>
            <person name="Whitehead S.L."/>
            <person name="Wilkinson J.E."/>
            <person name="Willey D.L."/>
            <person name="Williams H."/>
            <person name="Wilming L."/>
            <person name="Wray P.W."/>
            <person name="Wu Z."/>
            <person name="Coulson A."/>
            <person name="Vaudin M."/>
            <person name="Sulston J.E."/>
            <person name="Durbin R.M."/>
            <person name="Hubbard T."/>
            <person name="Wooster R."/>
            <person name="Dunham I."/>
            <person name="Carter N.P."/>
            <person name="McVean G."/>
            <person name="Ross M.T."/>
            <person name="Harrow J."/>
            <person name="Olson M.V."/>
            <person name="Beck S."/>
            <person name="Rogers J."/>
            <person name="Bentley D.R."/>
        </authorList>
    </citation>
    <scope>NUCLEOTIDE SEQUENCE [LARGE SCALE GENOMIC DNA]</scope>
</reference>
<reference key="11">
    <citation type="journal article" date="1988" name="Biochem. J.">
        <title>Protein-sequence studies on Rh-related polypeptides suggest the presence of at least two groups of proteins which associate in the human red-cell membrane.</title>
        <authorList>
            <person name="Avent N.D."/>
            <person name="Ridgwell K."/>
            <person name="Mawby W.J."/>
            <person name="Tanner M.J.A."/>
            <person name="Anstee D.J."/>
            <person name="Kumpel B."/>
        </authorList>
    </citation>
    <scope>PROTEIN SEQUENCE OF 2-33</scope>
</reference>
<reference key="12">
    <citation type="journal article" date="1988" name="Proc. Natl. Acad. Sci. U.S.A.">
        <title>Polymorphism in the Mr 32,000 Rh protein purified from Rh(D)-positive and -negative erythrocytes.</title>
        <authorList>
            <person name="Saboori A.M."/>
            <person name="Smith B.L."/>
            <person name="Agre P."/>
        </authorList>
    </citation>
    <scope>PROTEIN SEQUENCE OF 2-21</scope>
</reference>
<reference key="13">
    <citation type="journal article" date="1988" name="Blood">
        <title>Determination of the N-terminal sequence of human red cell Rh(D) polypeptide and demonstration that the Rh(D), (c), and (E) antigens are carried by distinct polypeptide chains.</title>
        <authorList>
            <person name="Bloy C."/>
            <person name="Blanchard D."/>
            <person name="Dahr W."/>
            <person name="Beyreuther K."/>
            <person name="Salmon C."/>
            <person name="Cartron J.-P."/>
        </authorList>
    </citation>
    <scope>PROTEIN SEQUENCE OF 2-17</scope>
</reference>
<reference key="14">
    <citation type="journal article" date="1991" name="Blood">
        <title>Regarding the size of Rh proteins.</title>
        <authorList>
            <person name="Suyama K."/>
            <person name="Goldstein J."/>
            <person name="Aebersold R."/>
            <person name="Kent S."/>
        </authorList>
    </citation>
    <scope>PROTEIN SEQUENCE OF 401-407</scope>
</reference>
<reference key="15">
    <citation type="journal article" date="1988" name="J. Biol. Chem.">
        <title>The Rh polypeptide is a major fatty acid-acylated erythrocyte membrane protein.</title>
        <authorList>
            <person name="de Vetten M.P."/>
            <person name="Agre P."/>
        </authorList>
    </citation>
    <scope>SUBCELLULAR LOCATION</scope>
    <scope>PALMITOYLATION</scope>
</reference>
<reference key="16">
    <citation type="journal article" date="1991" name="Blood">
        <title>Genetic basis of the RhD-positive and RhD-negative blood group polymorphism as determined by Southern analysis.</title>
        <authorList>
            <person name="Colin Y."/>
            <person name="Cherif-Zahar B."/>
            <person name="Le Van Kim C."/>
            <person name="Raynal V."/>
            <person name="Van Huffel V."/>
            <person name="Cartron J.P."/>
        </authorList>
    </citation>
    <scope>INVOLVEMENT IN RH BLOOD GROUP SYSTEM</scope>
</reference>
<reference key="17">
    <citation type="journal article" date="1992" name="J. Biol. Chem.">
        <title>Mammalian red cell membrane Rh polypeptides are selectively palmitoylated subunits of a macromolecular complex.</title>
        <authorList>
            <person name="Hartel-Schenk S."/>
            <person name="Agre P."/>
        </authorList>
    </citation>
    <scope>SUBCELLULAR LOCATION</scope>
    <scope>PALMITOYLATION</scope>
</reference>
<reference key="18">
    <citation type="journal article" date="1999" name="Blood">
        <title>Molecular basis of weak D phenotypes.</title>
        <authorList>
            <person name="Wagner F.F."/>
            <person name="Gassner C."/>
            <person name="Mueller T.H."/>
            <person name="Schoenitzer D."/>
            <person name="Schunter F."/>
            <person name="Flegel W.A."/>
        </authorList>
    </citation>
    <scope>INVOLVEMENT IN RH BLOOD GROUP SYSTEM</scope>
    <scope>VARIANTS CYS-3; GLN-10; ASP-149; THR-182; ASN-198; ARG-201; ARG-220; VAL-223; GLY-270; PRO-276; GLU-277; ASP-282; ILE-283; PRO-294; ILE-295; ARG-307; GLU-339; ALA-385 AND ARG-393</scope>
</reference>
<reference key="19">
    <citation type="journal article" date="2000" name="Blood">
        <title>RHD gene deletion occurred in the Rhesus box.</title>
        <authorList>
            <person name="Wagner F.F."/>
            <person name="Flegel W.A."/>
        </authorList>
    </citation>
    <scope>INVOLVEMENT IN RH BLOOD GROUP SYSTEM</scope>
</reference>
<reference key="20">
    <citation type="journal article" date="2000" name="Blood Rev.">
        <title>RhD haemolytic disease of the fetus and the newborn.</title>
        <authorList>
            <person name="Urbaniak S.J."/>
            <person name="Greiss M.A."/>
        </authorList>
    </citation>
    <scope>INVOLVEMENT IN HDFNRH</scope>
</reference>
<reference key="21">
    <citation type="journal article" date="1995" name="Am. J. Hematol.">
        <title>Leu110Pro substitution in the RhD polypeptide is responsible for the DVII category blood group phenotype.</title>
        <authorList>
            <person name="Rouillac C."/>
            <person name="le van Kim C."/>
            <person name="Beolet M."/>
            <person name="Cartron J.-P."/>
            <person name="Colin Y."/>
        </authorList>
    </citation>
    <scope>VARIANT TAR ANTIGEN PRO-110</scope>
</reference>
<reference key="22">
    <citation type="journal article" date="2006" name="Science">
        <title>The consensus coding sequences of human breast and colorectal cancers.</title>
        <authorList>
            <person name="Sjoeblom T."/>
            <person name="Jones S."/>
            <person name="Wood L.D."/>
            <person name="Parsons D.W."/>
            <person name="Lin J."/>
            <person name="Barber T.D."/>
            <person name="Mandelker D."/>
            <person name="Leary R.J."/>
            <person name="Ptak J."/>
            <person name="Silliman N."/>
            <person name="Szabo S."/>
            <person name="Buckhaults P."/>
            <person name="Farrell C."/>
            <person name="Meeh P."/>
            <person name="Markowitz S.D."/>
            <person name="Willis J."/>
            <person name="Dawson D."/>
            <person name="Willson J.K.V."/>
            <person name="Gazdar A.F."/>
            <person name="Hartigan J."/>
            <person name="Wu L."/>
            <person name="Liu C."/>
            <person name="Parmigiani G."/>
            <person name="Park B.H."/>
            <person name="Bachman K.E."/>
            <person name="Papadopoulos N."/>
            <person name="Vogelstein B."/>
            <person name="Kinzler K.W."/>
            <person name="Velculescu V.E."/>
        </authorList>
    </citation>
    <scope>VARIANT [LARGE SCALE ANALYSIS] CYS-103</scope>
</reference>
<keyword id="KW-0025">Alternative splicing</keyword>
<keyword id="KW-0095">Blood group antigen</keyword>
<keyword id="KW-1003">Cell membrane</keyword>
<keyword id="KW-0903">Direct protein sequencing</keyword>
<keyword id="KW-0449">Lipoprotein</keyword>
<keyword id="KW-0472">Membrane</keyword>
<keyword id="KW-0564">Palmitate</keyword>
<keyword id="KW-1267">Proteomics identification</keyword>
<keyword id="KW-1185">Reference proteome</keyword>
<keyword id="KW-0812">Transmembrane</keyword>
<keyword id="KW-1133">Transmembrane helix</keyword>
<gene>
    <name type="primary">RHD</name>
</gene>
<organism>
    <name type="scientific">Homo sapiens</name>
    <name type="common">Human</name>
    <dbReference type="NCBI Taxonomy" id="9606"/>
    <lineage>
        <taxon>Eukaryota</taxon>
        <taxon>Metazoa</taxon>
        <taxon>Chordata</taxon>
        <taxon>Craniata</taxon>
        <taxon>Vertebrata</taxon>
        <taxon>Euteleostomi</taxon>
        <taxon>Mammalia</taxon>
        <taxon>Eutheria</taxon>
        <taxon>Euarchontoglires</taxon>
        <taxon>Primates</taxon>
        <taxon>Haplorrhini</taxon>
        <taxon>Catarrhini</taxon>
        <taxon>Hominidae</taxon>
        <taxon>Homo</taxon>
    </lineage>
</organism>